<evidence type="ECO:0000255" key="1">
    <source>
        <dbReference type="HAMAP-Rule" id="MF_01694"/>
    </source>
</evidence>
<evidence type="ECO:0000255" key="2">
    <source>
        <dbReference type="PROSITE-ProRule" id="PRU01266"/>
    </source>
</evidence>
<evidence type="ECO:0000256" key="3">
    <source>
        <dbReference type="SAM" id="MobiDB-lite"/>
    </source>
</evidence>
<evidence type="ECO:0000305" key="4"/>
<feature type="chain" id="PRO_0000381577" description="Biotin synthase">
    <location>
        <begin position="1"/>
        <end position="341"/>
    </location>
</feature>
<feature type="domain" description="Radical SAM core" evidence="2">
    <location>
        <begin position="40"/>
        <end position="264"/>
    </location>
</feature>
<feature type="region of interest" description="Disordered" evidence="3">
    <location>
        <begin position="317"/>
        <end position="341"/>
    </location>
</feature>
<feature type="binding site" evidence="1">
    <location>
        <position position="55"/>
    </location>
    <ligand>
        <name>[4Fe-4S] cluster</name>
        <dbReference type="ChEBI" id="CHEBI:49883"/>
        <note>4Fe-4S-S-AdoMet</note>
    </ligand>
</feature>
<feature type="binding site" evidence="1">
    <location>
        <position position="59"/>
    </location>
    <ligand>
        <name>[4Fe-4S] cluster</name>
        <dbReference type="ChEBI" id="CHEBI:49883"/>
        <note>4Fe-4S-S-AdoMet</note>
    </ligand>
</feature>
<feature type="binding site" evidence="1">
    <location>
        <position position="62"/>
    </location>
    <ligand>
        <name>[4Fe-4S] cluster</name>
        <dbReference type="ChEBI" id="CHEBI:49883"/>
        <note>4Fe-4S-S-AdoMet</note>
    </ligand>
</feature>
<feature type="binding site" evidence="1">
    <location>
        <position position="99"/>
    </location>
    <ligand>
        <name>[2Fe-2S] cluster</name>
        <dbReference type="ChEBI" id="CHEBI:190135"/>
    </ligand>
</feature>
<feature type="binding site" evidence="1">
    <location>
        <position position="132"/>
    </location>
    <ligand>
        <name>[2Fe-2S] cluster</name>
        <dbReference type="ChEBI" id="CHEBI:190135"/>
    </ligand>
</feature>
<feature type="binding site" evidence="1">
    <location>
        <position position="192"/>
    </location>
    <ligand>
        <name>[2Fe-2S] cluster</name>
        <dbReference type="ChEBI" id="CHEBI:190135"/>
    </ligand>
</feature>
<feature type="binding site" evidence="1">
    <location>
        <position position="262"/>
    </location>
    <ligand>
        <name>[2Fe-2S] cluster</name>
        <dbReference type="ChEBI" id="CHEBI:190135"/>
    </ligand>
</feature>
<organism>
    <name type="scientific">Renibacterium salmoninarum (strain ATCC 33209 / DSM 20767 / JCM 11484 / NBRC 15589 / NCIMB 2235)</name>
    <dbReference type="NCBI Taxonomy" id="288705"/>
    <lineage>
        <taxon>Bacteria</taxon>
        <taxon>Bacillati</taxon>
        <taxon>Actinomycetota</taxon>
        <taxon>Actinomycetes</taxon>
        <taxon>Micrococcales</taxon>
        <taxon>Micrococcaceae</taxon>
        <taxon>Renibacterium</taxon>
    </lineage>
</organism>
<keyword id="KW-0001">2Fe-2S</keyword>
<keyword id="KW-0004">4Fe-4S</keyword>
<keyword id="KW-0093">Biotin biosynthesis</keyword>
<keyword id="KW-0408">Iron</keyword>
<keyword id="KW-0411">Iron-sulfur</keyword>
<keyword id="KW-0479">Metal-binding</keyword>
<keyword id="KW-1185">Reference proteome</keyword>
<keyword id="KW-0949">S-adenosyl-L-methionine</keyword>
<keyword id="KW-0808">Transferase</keyword>
<proteinExistence type="inferred from homology"/>
<comment type="function">
    <text evidence="1">Catalyzes the conversion of dethiobiotin (DTB) to biotin by the insertion of a sulfur atom into dethiobiotin via a radical-based mechanism.</text>
</comment>
<comment type="catalytic activity">
    <reaction evidence="1">
        <text>(4R,5S)-dethiobiotin + (sulfur carrier)-SH + 2 reduced [2Fe-2S]-[ferredoxin] + 2 S-adenosyl-L-methionine = (sulfur carrier)-H + biotin + 2 5'-deoxyadenosine + 2 L-methionine + 2 oxidized [2Fe-2S]-[ferredoxin]</text>
        <dbReference type="Rhea" id="RHEA:22060"/>
        <dbReference type="Rhea" id="RHEA-COMP:10000"/>
        <dbReference type="Rhea" id="RHEA-COMP:10001"/>
        <dbReference type="Rhea" id="RHEA-COMP:14737"/>
        <dbReference type="Rhea" id="RHEA-COMP:14739"/>
        <dbReference type="ChEBI" id="CHEBI:17319"/>
        <dbReference type="ChEBI" id="CHEBI:29917"/>
        <dbReference type="ChEBI" id="CHEBI:33737"/>
        <dbReference type="ChEBI" id="CHEBI:33738"/>
        <dbReference type="ChEBI" id="CHEBI:57586"/>
        <dbReference type="ChEBI" id="CHEBI:57844"/>
        <dbReference type="ChEBI" id="CHEBI:59789"/>
        <dbReference type="ChEBI" id="CHEBI:64428"/>
        <dbReference type="ChEBI" id="CHEBI:149473"/>
        <dbReference type="EC" id="2.8.1.6"/>
    </reaction>
</comment>
<comment type="cofactor">
    <cofactor evidence="1">
        <name>[4Fe-4S] cluster</name>
        <dbReference type="ChEBI" id="CHEBI:49883"/>
    </cofactor>
    <text evidence="1">Binds 1 [4Fe-4S] cluster. The cluster is coordinated with 3 cysteines and an exchangeable S-adenosyl-L-methionine.</text>
</comment>
<comment type="cofactor">
    <cofactor evidence="1">
        <name>[2Fe-2S] cluster</name>
        <dbReference type="ChEBI" id="CHEBI:190135"/>
    </cofactor>
    <text evidence="1">Binds 1 [2Fe-2S] cluster. The cluster is coordinated with 3 cysteines and 1 arginine.</text>
</comment>
<comment type="pathway">
    <text evidence="1">Cofactor biosynthesis; biotin biosynthesis; biotin from 7,8-diaminononanoate: step 2/2.</text>
</comment>
<comment type="subunit">
    <text evidence="1">Homodimer.</text>
</comment>
<comment type="similarity">
    <text evidence="1">Belongs to the radical SAM superfamily. Biotin synthase family.</text>
</comment>
<comment type="sequence caution" evidence="4">
    <conflict type="erroneous initiation">
        <sequence resource="EMBL-CDS" id="ABY22306"/>
    </conflict>
</comment>
<sequence length="341" mass="36559">MLSGVELSRDEALVLLRSDPANYLSLLAAAARLRSAYFGNSVKLNYLVNLKSGLCPEDCTYCSQRLGSAAQILKYSWLKSEDAIDQAEQGLAGGASRVCFVASGRGPSDRDVDRVAGLVGDFKTRNPQAEVCACLGILKEGQAERLKSCGVDAYNHNLNTSEEKYSEICTTHEFSDRTNTVKAAKAAGLSPCSGLIVGMGESDEELIDALFALRELGSESVPVNFLMPFEGTPLADTWLLTPVKCLQILCVARFVAPRSELRIAGSREMHLRSLQPLALHVANSIFLGDYLTSEGQSAAEDLAMIEDGGFVILDPRASAPQGGVEPVLRKRGAGTELQPNA</sequence>
<name>BIOB_RENSM</name>
<reference key="1">
    <citation type="journal article" date="2008" name="J. Bacteriol.">
        <title>Genome sequence of the fish pathogen Renibacterium salmoninarum suggests reductive evolution away from an environmental Arthrobacter ancestor.</title>
        <authorList>
            <person name="Wiens G.D."/>
            <person name="Rockey D.D."/>
            <person name="Wu Z."/>
            <person name="Chang J."/>
            <person name="Levy R."/>
            <person name="Crane S."/>
            <person name="Chen D.S."/>
            <person name="Capri G.R."/>
            <person name="Burnett J.R."/>
            <person name="Sudheesh P.S."/>
            <person name="Schipma M.J."/>
            <person name="Burd H."/>
            <person name="Bhattacharyya A."/>
            <person name="Rhodes L.D."/>
            <person name="Kaul R."/>
            <person name="Strom M.S."/>
        </authorList>
    </citation>
    <scope>NUCLEOTIDE SEQUENCE [LARGE SCALE GENOMIC DNA]</scope>
    <source>
        <strain>ATCC 33209 / DSM 20767 / JCM 11484 / NBRC 15589 / NCIMB 2235</strain>
    </source>
</reference>
<protein>
    <recommendedName>
        <fullName evidence="1">Biotin synthase</fullName>
        <ecNumber evidence="1">2.8.1.6</ecNumber>
    </recommendedName>
</protein>
<gene>
    <name evidence="1" type="primary">bioB</name>
    <name type="ordered locus">RSal33209_0557</name>
</gene>
<dbReference type="EC" id="2.8.1.6" evidence="1"/>
<dbReference type="EMBL" id="CP000910">
    <property type="protein sequence ID" value="ABY22306.1"/>
    <property type="status" value="ALT_INIT"/>
    <property type="molecule type" value="Genomic_DNA"/>
</dbReference>
<dbReference type="SMR" id="A9WL37"/>
<dbReference type="STRING" id="288705.RSal33209_0557"/>
<dbReference type="KEGG" id="rsa:RSal33209_0557"/>
<dbReference type="eggNOG" id="COG0502">
    <property type="taxonomic scope" value="Bacteria"/>
</dbReference>
<dbReference type="HOGENOM" id="CLU_033172_2_1_11"/>
<dbReference type="UniPathway" id="UPA00078">
    <property type="reaction ID" value="UER00162"/>
</dbReference>
<dbReference type="Proteomes" id="UP000002007">
    <property type="component" value="Chromosome"/>
</dbReference>
<dbReference type="GO" id="GO:0051537">
    <property type="term" value="F:2 iron, 2 sulfur cluster binding"/>
    <property type="evidence" value="ECO:0007669"/>
    <property type="project" value="UniProtKB-KW"/>
</dbReference>
<dbReference type="GO" id="GO:0051539">
    <property type="term" value="F:4 iron, 4 sulfur cluster binding"/>
    <property type="evidence" value="ECO:0007669"/>
    <property type="project" value="UniProtKB-KW"/>
</dbReference>
<dbReference type="GO" id="GO:0004076">
    <property type="term" value="F:biotin synthase activity"/>
    <property type="evidence" value="ECO:0007669"/>
    <property type="project" value="UniProtKB-UniRule"/>
</dbReference>
<dbReference type="GO" id="GO:0005506">
    <property type="term" value="F:iron ion binding"/>
    <property type="evidence" value="ECO:0007669"/>
    <property type="project" value="UniProtKB-UniRule"/>
</dbReference>
<dbReference type="GO" id="GO:0009102">
    <property type="term" value="P:biotin biosynthetic process"/>
    <property type="evidence" value="ECO:0007669"/>
    <property type="project" value="UniProtKB-UniRule"/>
</dbReference>
<dbReference type="CDD" id="cd01335">
    <property type="entry name" value="Radical_SAM"/>
    <property type="match status" value="1"/>
</dbReference>
<dbReference type="FunFam" id="3.20.20.70:FF:000026">
    <property type="entry name" value="Biotin synthase"/>
    <property type="match status" value="1"/>
</dbReference>
<dbReference type="Gene3D" id="3.20.20.70">
    <property type="entry name" value="Aldolase class I"/>
    <property type="match status" value="1"/>
</dbReference>
<dbReference type="HAMAP" id="MF_01694">
    <property type="entry name" value="BioB"/>
    <property type="match status" value="1"/>
</dbReference>
<dbReference type="InterPro" id="IPR013785">
    <property type="entry name" value="Aldolase_TIM"/>
</dbReference>
<dbReference type="InterPro" id="IPR010722">
    <property type="entry name" value="BATS_dom"/>
</dbReference>
<dbReference type="InterPro" id="IPR002684">
    <property type="entry name" value="Biotin_synth/BioAB"/>
</dbReference>
<dbReference type="InterPro" id="IPR024177">
    <property type="entry name" value="Biotin_synthase"/>
</dbReference>
<dbReference type="InterPro" id="IPR006638">
    <property type="entry name" value="Elp3/MiaA/NifB-like_rSAM"/>
</dbReference>
<dbReference type="InterPro" id="IPR007197">
    <property type="entry name" value="rSAM"/>
</dbReference>
<dbReference type="NCBIfam" id="TIGR00433">
    <property type="entry name" value="bioB"/>
    <property type="match status" value="1"/>
</dbReference>
<dbReference type="PANTHER" id="PTHR22976">
    <property type="entry name" value="BIOTIN SYNTHASE"/>
    <property type="match status" value="1"/>
</dbReference>
<dbReference type="PANTHER" id="PTHR22976:SF2">
    <property type="entry name" value="BIOTIN SYNTHASE, MITOCHONDRIAL"/>
    <property type="match status" value="1"/>
</dbReference>
<dbReference type="Pfam" id="PF06968">
    <property type="entry name" value="BATS"/>
    <property type="match status" value="1"/>
</dbReference>
<dbReference type="Pfam" id="PF04055">
    <property type="entry name" value="Radical_SAM"/>
    <property type="match status" value="1"/>
</dbReference>
<dbReference type="PIRSF" id="PIRSF001619">
    <property type="entry name" value="Biotin_synth"/>
    <property type="match status" value="1"/>
</dbReference>
<dbReference type="SFLD" id="SFLDG01060">
    <property type="entry name" value="BATS_domain_containing"/>
    <property type="match status" value="1"/>
</dbReference>
<dbReference type="SFLD" id="SFLDG01278">
    <property type="entry name" value="biotin_synthase_like"/>
    <property type="match status" value="1"/>
</dbReference>
<dbReference type="SMART" id="SM00876">
    <property type="entry name" value="BATS"/>
    <property type="match status" value="1"/>
</dbReference>
<dbReference type="SMART" id="SM00729">
    <property type="entry name" value="Elp3"/>
    <property type="match status" value="1"/>
</dbReference>
<dbReference type="SUPFAM" id="SSF102114">
    <property type="entry name" value="Radical SAM enzymes"/>
    <property type="match status" value="1"/>
</dbReference>
<dbReference type="PROSITE" id="PS51918">
    <property type="entry name" value="RADICAL_SAM"/>
    <property type="match status" value="1"/>
</dbReference>
<accession>A9WL37</accession>